<organism>
    <name type="scientific">Gloeothece citriformis (strain PCC 7424)</name>
    <name type="common">Cyanothece sp. (strain PCC 7424)</name>
    <dbReference type="NCBI Taxonomy" id="65393"/>
    <lineage>
        <taxon>Bacteria</taxon>
        <taxon>Bacillati</taxon>
        <taxon>Cyanobacteriota</taxon>
        <taxon>Cyanophyceae</taxon>
        <taxon>Oscillatoriophycideae</taxon>
        <taxon>Chroococcales</taxon>
        <taxon>Aphanothecaceae</taxon>
        <taxon>Gloeothece</taxon>
        <taxon>Gloeothece citriformis</taxon>
    </lineage>
</organism>
<proteinExistence type="inferred from homology"/>
<comment type="similarity">
    <text evidence="1">Belongs to the bacterial ribosomal protein bS21 family.</text>
</comment>
<protein>
    <recommendedName>
        <fullName evidence="1">Small ribosomal subunit protein bS21</fullName>
    </recommendedName>
    <alternativeName>
        <fullName evidence="3">30S ribosomal protein S21</fullName>
    </alternativeName>
</protein>
<feature type="chain" id="PRO_1000120606" description="Small ribosomal subunit protein bS21">
    <location>
        <begin position="1"/>
        <end position="60"/>
    </location>
</feature>
<feature type="region of interest" description="Disordered" evidence="2">
    <location>
        <begin position="41"/>
        <end position="60"/>
    </location>
</feature>
<feature type="compositionally biased region" description="Basic residues" evidence="2">
    <location>
        <begin position="45"/>
        <end position="60"/>
    </location>
</feature>
<name>RS21_GLOC7</name>
<gene>
    <name evidence="1" type="primary">rpsU</name>
    <name evidence="1" type="synonym">rps21</name>
    <name type="ordered locus">PCC7424_4131</name>
</gene>
<keyword id="KW-1185">Reference proteome</keyword>
<keyword id="KW-0687">Ribonucleoprotein</keyword>
<keyword id="KW-0689">Ribosomal protein</keyword>
<accession>B7KLD0</accession>
<dbReference type="EMBL" id="CP001291">
    <property type="protein sequence ID" value="ACK72502.1"/>
    <property type="molecule type" value="Genomic_DNA"/>
</dbReference>
<dbReference type="RefSeq" id="WP_015956087.1">
    <property type="nucleotide sequence ID" value="NC_011729.1"/>
</dbReference>
<dbReference type="SMR" id="B7KLD0"/>
<dbReference type="STRING" id="65393.PCC7424_4131"/>
<dbReference type="KEGG" id="cyc:PCC7424_4131"/>
<dbReference type="eggNOG" id="COG0828">
    <property type="taxonomic scope" value="Bacteria"/>
</dbReference>
<dbReference type="HOGENOM" id="CLU_159258_3_1_3"/>
<dbReference type="OrthoDB" id="9799244at2"/>
<dbReference type="Proteomes" id="UP000002384">
    <property type="component" value="Chromosome"/>
</dbReference>
<dbReference type="GO" id="GO:1990904">
    <property type="term" value="C:ribonucleoprotein complex"/>
    <property type="evidence" value="ECO:0007669"/>
    <property type="project" value="UniProtKB-KW"/>
</dbReference>
<dbReference type="GO" id="GO:0005840">
    <property type="term" value="C:ribosome"/>
    <property type="evidence" value="ECO:0007669"/>
    <property type="project" value="UniProtKB-KW"/>
</dbReference>
<dbReference type="GO" id="GO:0003735">
    <property type="term" value="F:structural constituent of ribosome"/>
    <property type="evidence" value="ECO:0007669"/>
    <property type="project" value="InterPro"/>
</dbReference>
<dbReference type="GO" id="GO:0006412">
    <property type="term" value="P:translation"/>
    <property type="evidence" value="ECO:0007669"/>
    <property type="project" value="UniProtKB-UniRule"/>
</dbReference>
<dbReference type="Gene3D" id="1.20.5.1150">
    <property type="entry name" value="Ribosomal protein S8"/>
    <property type="match status" value="1"/>
</dbReference>
<dbReference type="HAMAP" id="MF_00358">
    <property type="entry name" value="Ribosomal_bS21"/>
    <property type="match status" value="1"/>
</dbReference>
<dbReference type="InterPro" id="IPR001911">
    <property type="entry name" value="Ribosomal_bS21"/>
</dbReference>
<dbReference type="InterPro" id="IPR018278">
    <property type="entry name" value="Ribosomal_bS21_CS"/>
</dbReference>
<dbReference type="InterPro" id="IPR038380">
    <property type="entry name" value="Ribosomal_bS21_sf"/>
</dbReference>
<dbReference type="NCBIfam" id="TIGR00030">
    <property type="entry name" value="S21p"/>
    <property type="match status" value="1"/>
</dbReference>
<dbReference type="PANTHER" id="PTHR21109">
    <property type="entry name" value="MITOCHONDRIAL 28S RIBOSOMAL PROTEIN S21"/>
    <property type="match status" value="1"/>
</dbReference>
<dbReference type="PANTHER" id="PTHR21109:SF0">
    <property type="entry name" value="SMALL RIBOSOMAL SUBUNIT PROTEIN BS21M"/>
    <property type="match status" value="1"/>
</dbReference>
<dbReference type="Pfam" id="PF01165">
    <property type="entry name" value="Ribosomal_S21"/>
    <property type="match status" value="1"/>
</dbReference>
<dbReference type="PRINTS" id="PR00976">
    <property type="entry name" value="RIBOSOMALS21"/>
</dbReference>
<dbReference type="PROSITE" id="PS01181">
    <property type="entry name" value="RIBOSOMAL_S21"/>
    <property type="match status" value="1"/>
</dbReference>
<evidence type="ECO:0000255" key="1">
    <source>
        <dbReference type="HAMAP-Rule" id="MF_00358"/>
    </source>
</evidence>
<evidence type="ECO:0000256" key="2">
    <source>
        <dbReference type="SAM" id="MobiDB-lite"/>
    </source>
</evidence>
<evidence type="ECO:0000305" key="3"/>
<sequence length="60" mass="7216">MTQVVIGQNEAIESALRRFKRQVAKAGIYADIKKNQFFETPEEKRKRKAIARRRQRSRRR</sequence>
<reference key="1">
    <citation type="journal article" date="2011" name="MBio">
        <title>Novel metabolic attributes of the genus Cyanothece, comprising a group of unicellular nitrogen-fixing Cyanobacteria.</title>
        <authorList>
            <person name="Bandyopadhyay A."/>
            <person name="Elvitigala T."/>
            <person name="Welsh E."/>
            <person name="Stockel J."/>
            <person name="Liberton M."/>
            <person name="Min H."/>
            <person name="Sherman L.A."/>
            <person name="Pakrasi H.B."/>
        </authorList>
    </citation>
    <scope>NUCLEOTIDE SEQUENCE [LARGE SCALE GENOMIC DNA]</scope>
    <source>
        <strain>PCC 7424</strain>
    </source>
</reference>